<reference key="1">
    <citation type="journal article" date="2002" name="Nature">
        <title>The genome sequence of Schizosaccharomyces pombe.</title>
        <authorList>
            <person name="Wood V."/>
            <person name="Gwilliam R."/>
            <person name="Rajandream M.A."/>
            <person name="Lyne M.H."/>
            <person name="Lyne R."/>
            <person name="Stewart A."/>
            <person name="Sgouros J.G."/>
            <person name="Peat N."/>
            <person name="Hayles J."/>
            <person name="Baker S.G."/>
            <person name="Basham D."/>
            <person name="Bowman S."/>
            <person name="Brooks K."/>
            <person name="Brown D."/>
            <person name="Brown S."/>
            <person name="Chillingworth T."/>
            <person name="Churcher C.M."/>
            <person name="Collins M."/>
            <person name="Connor R."/>
            <person name="Cronin A."/>
            <person name="Davis P."/>
            <person name="Feltwell T."/>
            <person name="Fraser A."/>
            <person name="Gentles S."/>
            <person name="Goble A."/>
            <person name="Hamlin N."/>
            <person name="Harris D.E."/>
            <person name="Hidalgo J."/>
            <person name="Hodgson G."/>
            <person name="Holroyd S."/>
            <person name="Hornsby T."/>
            <person name="Howarth S."/>
            <person name="Huckle E.J."/>
            <person name="Hunt S."/>
            <person name="Jagels K."/>
            <person name="James K.D."/>
            <person name="Jones L."/>
            <person name="Jones M."/>
            <person name="Leather S."/>
            <person name="McDonald S."/>
            <person name="McLean J."/>
            <person name="Mooney P."/>
            <person name="Moule S."/>
            <person name="Mungall K.L."/>
            <person name="Murphy L.D."/>
            <person name="Niblett D."/>
            <person name="Odell C."/>
            <person name="Oliver K."/>
            <person name="O'Neil S."/>
            <person name="Pearson D."/>
            <person name="Quail M.A."/>
            <person name="Rabbinowitsch E."/>
            <person name="Rutherford K.M."/>
            <person name="Rutter S."/>
            <person name="Saunders D."/>
            <person name="Seeger K."/>
            <person name="Sharp S."/>
            <person name="Skelton J."/>
            <person name="Simmonds M.N."/>
            <person name="Squares R."/>
            <person name="Squares S."/>
            <person name="Stevens K."/>
            <person name="Taylor K."/>
            <person name="Taylor R.G."/>
            <person name="Tivey A."/>
            <person name="Walsh S.V."/>
            <person name="Warren T."/>
            <person name="Whitehead S."/>
            <person name="Woodward J.R."/>
            <person name="Volckaert G."/>
            <person name="Aert R."/>
            <person name="Robben J."/>
            <person name="Grymonprez B."/>
            <person name="Weltjens I."/>
            <person name="Vanstreels E."/>
            <person name="Rieger M."/>
            <person name="Schaefer M."/>
            <person name="Mueller-Auer S."/>
            <person name="Gabel C."/>
            <person name="Fuchs M."/>
            <person name="Duesterhoeft A."/>
            <person name="Fritzc C."/>
            <person name="Holzer E."/>
            <person name="Moestl D."/>
            <person name="Hilbert H."/>
            <person name="Borzym K."/>
            <person name="Langer I."/>
            <person name="Beck A."/>
            <person name="Lehrach H."/>
            <person name="Reinhardt R."/>
            <person name="Pohl T.M."/>
            <person name="Eger P."/>
            <person name="Zimmermann W."/>
            <person name="Wedler H."/>
            <person name="Wambutt R."/>
            <person name="Purnelle B."/>
            <person name="Goffeau A."/>
            <person name="Cadieu E."/>
            <person name="Dreano S."/>
            <person name="Gloux S."/>
            <person name="Lelaure V."/>
            <person name="Mottier S."/>
            <person name="Galibert F."/>
            <person name="Aves S.J."/>
            <person name="Xiang Z."/>
            <person name="Hunt C."/>
            <person name="Moore K."/>
            <person name="Hurst S.M."/>
            <person name="Lucas M."/>
            <person name="Rochet M."/>
            <person name="Gaillardin C."/>
            <person name="Tallada V.A."/>
            <person name="Garzon A."/>
            <person name="Thode G."/>
            <person name="Daga R.R."/>
            <person name="Cruzado L."/>
            <person name="Jimenez J."/>
            <person name="Sanchez M."/>
            <person name="del Rey F."/>
            <person name="Benito J."/>
            <person name="Dominguez A."/>
            <person name="Revuelta J.L."/>
            <person name="Moreno S."/>
            <person name="Armstrong J."/>
            <person name="Forsburg S.L."/>
            <person name="Cerutti L."/>
            <person name="Lowe T."/>
            <person name="McCombie W.R."/>
            <person name="Paulsen I."/>
            <person name="Potashkin J."/>
            <person name="Shpakovski G.V."/>
            <person name="Ussery D."/>
            <person name="Barrell B.G."/>
            <person name="Nurse P."/>
        </authorList>
    </citation>
    <scope>NUCLEOTIDE SEQUENCE [LARGE SCALE GENOMIC DNA]</scope>
    <source>
        <strain>972 / ATCC 24843</strain>
    </source>
</reference>
<reference key="2">
    <citation type="journal article" date="2006" name="Nat. Biotechnol.">
        <title>ORFeome cloning and global analysis of protein localization in the fission yeast Schizosaccharomyces pombe.</title>
        <authorList>
            <person name="Matsuyama A."/>
            <person name="Arai R."/>
            <person name="Yashiroda Y."/>
            <person name="Shirai A."/>
            <person name="Kamata A."/>
            <person name="Sekido S."/>
            <person name="Kobayashi Y."/>
            <person name="Hashimoto A."/>
            <person name="Hamamoto M."/>
            <person name="Hiraoka Y."/>
            <person name="Horinouchi S."/>
            <person name="Yoshida M."/>
        </authorList>
    </citation>
    <scope>SUBCELLULAR LOCATION [LARGE SCALE ANALYSIS]</scope>
</reference>
<proteinExistence type="inferred from homology"/>
<name>SDO1_SCHPO</name>
<evidence type="ECO:0000250" key="1"/>
<evidence type="ECO:0000269" key="2">
    <source>
    </source>
</evidence>
<evidence type="ECO:0000305" key="3"/>
<keyword id="KW-0963">Cytoplasm</keyword>
<keyword id="KW-0539">Nucleus</keyword>
<keyword id="KW-1185">Reference proteome</keyword>
<keyword id="KW-0690">Ribosome biogenesis</keyword>
<comment type="function">
    <text>Involved in the biogenesis of the 60S ribosomal subunit and translational activation of ribosomes. Together with the EF-2-like GTPase ria1, may trigger the GTP-dependent release of tif6 from 60S pre-ribosomes in the cytoplasm, thereby activating ribosomes for translation competence by allowing 80S ribosome assembly and facilitating tif6 recycling to the nucleus, where it is required for 60S rRNA processing and nuclear export.</text>
</comment>
<comment type="subunit">
    <text evidence="1">Associates with the 60S ribosomal subunit.</text>
</comment>
<comment type="subcellular location">
    <subcellularLocation>
        <location evidence="2">Cytoplasm</location>
    </subcellularLocation>
    <subcellularLocation>
        <location evidence="2">Nucleus</location>
    </subcellularLocation>
</comment>
<comment type="similarity">
    <text evidence="3">Belongs to the SDO1/SBDS family.</text>
</comment>
<protein>
    <recommendedName>
        <fullName>Ribosome maturation protein sdo1</fullName>
    </recommendedName>
</protein>
<organism>
    <name type="scientific">Schizosaccharomyces pombe (strain 972 / ATCC 24843)</name>
    <name type="common">Fission yeast</name>
    <dbReference type="NCBI Taxonomy" id="284812"/>
    <lineage>
        <taxon>Eukaryota</taxon>
        <taxon>Fungi</taxon>
        <taxon>Dikarya</taxon>
        <taxon>Ascomycota</taxon>
        <taxon>Taphrinomycotina</taxon>
        <taxon>Schizosaccharomycetes</taxon>
        <taxon>Schizosaccharomycetales</taxon>
        <taxon>Schizosaccharomycetaceae</taxon>
        <taxon>Schizosaccharomyces</taxon>
    </lineage>
</organism>
<gene>
    <name type="primary">sdo1</name>
    <name type="ORF">SPAC4F8.03</name>
</gene>
<dbReference type="EMBL" id="CU329670">
    <property type="protein sequence ID" value="CAB11050.1"/>
    <property type="molecule type" value="Genomic_DNA"/>
</dbReference>
<dbReference type="PIR" id="T38833">
    <property type="entry name" value="T38833"/>
</dbReference>
<dbReference type="RefSeq" id="NP_593869.1">
    <property type="nucleotide sequence ID" value="NM_001019298.2"/>
</dbReference>
<dbReference type="SMR" id="O14179"/>
<dbReference type="BioGRID" id="279879">
    <property type="interactions" value="1"/>
</dbReference>
<dbReference type="FunCoup" id="O14179">
    <property type="interactions" value="542"/>
</dbReference>
<dbReference type="STRING" id="284812.O14179"/>
<dbReference type="iPTMnet" id="O14179"/>
<dbReference type="PaxDb" id="4896-SPAC4F8.03.1"/>
<dbReference type="EnsemblFungi" id="SPAC4F8.03.1">
    <property type="protein sequence ID" value="SPAC4F8.03.1:pep"/>
    <property type="gene ID" value="SPAC4F8.03"/>
</dbReference>
<dbReference type="GeneID" id="2543459"/>
<dbReference type="KEGG" id="spo:2543459"/>
<dbReference type="PomBase" id="SPAC4F8.03">
    <property type="gene designation" value="sdo1"/>
</dbReference>
<dbReference type="VEuPathDB" id="FungiDB:SPAC4F8.03"/>
<dbReference type="eggNOG" id="KOG2917">
    <property type="taxonomic scope" value="Eukaryota"/>
</dbReference>
<dbReference type="HOGENOM" id="CLU_043216_1_1_1"/>
<dbReference type="InParanoid" id="O14179"/>
<dbReference type="OMA" id="AVNPQMD"/>
<dbReference type="PhylomeDB" id="O14179"/>
<dbReference type="PRO" id="PR:O14179"/>
<dbReference type="Proteomes" id="UP000002485">
    <property type="component" value="Chromosome I"/>
</dbReference>
<dbReference type="GO" id="GO:0005829">
    <property type="term" value="C:cytosol"/>
    <property type="evidence" value="ECO:0007005"/>
    <property type="project" value="PomBase"/>
</dbReference>
<dbReference type="GO" id="GO:0005730">
    <property type="term" value="C:nucleolus"/>
    <property type="evidence" value="ECO:0007005"/>
    <property type="project" value="PomBase"/>
</dbReference>
<dbReference type="GO" id="GO:0005634">
    <property type="term" value="C:nucleus"/>
    <property type="evidence" value="ECO:0007005"/>
    <property type="project" value="PomBase"/>
</dbReference>
<dbReference type="GO" id="GO:0030687">
    <property type="term" value="C:preribosome, large subunit precursor"/>
    <property type="evidence" value="ECO:0000266"/>
    <property type="project" value="PomBase"/>
</dbReference>
<dbReference type="GO" id="GO:0005085">
    <property type="term" value="F:guanyl-nucleotide exchange factor activity"/>
    <property type="evidence" value="ECO:0000266"/>
    <property type="project" value="PomBase"/>
</dbReference>
<dbReference type="GO" id="GO:0042256">
    <property type="term" value="P:cytosolic ribosome assembly"/>
    <property type="evidence" value="ECO:0007669"/>
    <property type="project" value="InterPro"/>
</dbReference>
<dbReference type="GO" id="GO:0042254">
    <property type="term" value="P:ribosome biogenesis"/>
    <property type="evidence" value="ECO:0000266"/>
    <property type="project" value="PomBase"/>
</dbReference>
<dbReference type="FunFam" id="3.30.1250.10:FF:000001">
    <property type="entry name" value="SBDS, ribosome maturation factor"/>
    <property type="match status" value="1"/>
</dbReference>
<dbReference type="Gene3D" id="3.30.70.240">
    <property type="match status" value="1"/>
</dbReference>
<dbReference type="Gene3D" id="3.30.1250.10">
    <property type="entry name" value="Ribosome maturation protein SBDS, N-terminal domain"/>
    <property type="match status" value="1"/>
</dbReference>
<dbReference type="Gene3D" id="1.10.10.900">
    <property type="entry name" value="SBDS protein C-terminal domain, subdomain 1"/>
    <property type="match status" value="1"/>
</dbReference>
<dbReference type="InterPro" id="IPR018023">
    <property type="entry name" value="Ribosome_mat_SBDS_CS"/>
</dbReference>
<dbReference type="InterPro" id="IPR036786">
    <property type="entry name" value="Ribosome_mat_SBDS_N_sf"/>
</dbReference>
<dbReference type="InterPro" id="IPR002140">
    <property type="entry name" value="Sdo1/SBDS"/>
</dbReference>
<dbReference type="InterPro" id="IPR039100">
    <property type="entry name" value="Sdo1/SBDS-like"/>
</dbReference>
<dbReference type="InterPro" id="IPR046928">
    <property type="entry name" value="SDO1/SBDS_C"/>
</dbReference>
<dbReference type="InterPro" id="IPR018978">
    <property type="entry name" value="SDO1/SBDS_central"/>
</dbReference>
<dbReference type="InterPro" id="IPR037188">
    <property type="entry name" value="Sdo1/SBDS_central_sf"/>
</dbReference>
<dbReference type="InterPro" id="IPR019783">
    <property type="entry name" value="SDO1/SBDS_N"/>
</dbReference>
<dbReference type="NCBIfam" id="TIGR00291">
    <property type="entry name" value="RNA_SBDS"/>
    <property type="match status" value="1"/>
</dbReference>
<dbReference type="PANTHER" id="PTHR10927">
    <property type="entry name" value="RIBOSOME MATURATION PROTEIN SBDS"/>
    <property type="match status" value="1"/>
</dbReference>
<dbReference type="PANTHER" id="PTHR10927:SF1">
    <property type="entry name" value="RIBOSOME MATURATION PROTEIN SBDS"/>
    <property type="match status" value="1"/>
</dbReference>
<dbReference type="Pfam" id="PF20268">
    <property type="entry name" value="SBDS_C"/>
    <property type="match status" value="1"/>
</dbReference>
<dbReference type="Pfam" id="PF09377">
    <property type="entry name" value="SBDS_domain_II"/>
    <property type="match status" value="1"/>
</dbReference>
<dbReference type="Pfam" id="PF01172">
    <property type="entry name" value="SBDS_N"/>
    <property type="match status" value="1"/>
</dbReference>
<dbReference type="SUPFAM" id="SSF89895">
    <property type="entry name" value="FYSH domain"/>
    <property type="match status" value="1"/>
</dbReference>
<dbReference type="SUPFAM" id="SSF109728">
    <property type="entry name" value="Hypothetical protein AF0491, middle domain"/>
    <property type="match status" value="1"/>
</dbReference>
<dbReference type="PROSITE" id="PS01267">
    <property type="entry name" value="UPF0023"/>
    <property type="match status" value="1"/>
</dbReference>
<accession>O14179</accession>
<feature type="chain" id="PRO_0000123765" description="Ribosome maturation protein sdo1">
    <location>
        <begin position="1"/>
        <end position="246"/>
    </location>
</feature>
<sequence>MVISQPVGQIRLTNVSVVKYKKGGKRFEVACYKNKVTEWRNKIETDLDEVLQIHNVFNNVSKGHVASRQDLKKAFGTDDIDKIILEILQKGDFQVGEKERHHQMSSTYRDIVSHVTAMCMDPNSKRPYPASIIEKALSDCGFSVSTSKTAKSQALEAIKKLQEKNEIPIVRARMRIRIVVDVKQGKALRERLRSLADEIEEENIDDEYECIALVIPGNYKLIDELVRNETKNRGMVQVLDMSEART</sequence>